<gene>
    <name evidence="1" type="primary">nei</name>
    <name type="ordered locus">SNSL254_A0788</name>
</gene>
<dbReference type="EC" id="3.2.2.-" evidence="1"/>
<dbReference type="EC" id="4.2.99.18" evidence="1"/>
<dbReference type="EMBL" id="CP001113">
    <property type="protein sequence ID" value="ACF65550.1"/>
    <property type="molecule type" value="Genomic_DNA"/>
</dbReference>
<dbReference type="RefSeq" id="WP_001113968.1">
    <property type="nucleotide sequence ID" value="NZ_CCMR01000003.1"/>
</dbReference>
<dbReference type="SMR" id="B4SZD3"/>
<dbReference type="KEGG" id="see:SNSL254_A0788"/>
<dbReference type="HOGENOM" id="CLU_038423_2_2_6"/>
<dbReference type="Proteomes" id="UP000008824">
    <property type="component" value="Chromosome"/>
</dbReference>
<dbReference type="GO" id="GO:0140078">
    <property type="term" value="F:class I DNA-(apurinic or apyrimidinic site) endonuclease activity"/>
    <property type="evidence" value="ECO:0007669"/>
    <property type="project" value="UniProtKB-EC"/>
</dbReference>
<dbReference type="GO" id="GO:0003684">
    <property type="term" value="F:damaged DNA binding"/>
    <property type="evidence" value="ECO:0007669"/>
    <property type="project" value="InterPro"/>
</dbReference>
<dbReference type="GO" id="GO:0000703">
    <property type="term" value="F:oxidized pyrimidine nucleobase lesion DNA N-glycosylase activity"/>
    <property type="evidence" value="ECO:0007669"/>
    <property type="project" value="UniProtKB-UniRule"/>
</dbReference>
<dbReference type="GO" id="GO:0008270">
    <property type="term" value="F:zinc ion binding"/>
    <property type="evidence" value="ECO:0007669"/>
    <property type="project" value="UniProtKB-UniRule"/>
</dbReference>
<dbReference type="GO" id="GO:0006284">
    <property type="term" value="P:base-excision repair"/>
    <property type="evidence" value="ECO:0007669"/>
    <property type="project" value="InterPro"/>
</dbReference>
<dbReference type="CDD" id="cd08965">
    <property type="entry name" value="EcNei-like_N"/>
    <property type="match status" value="1"/>
</dbReference>
<dbReference type="FunFam" id="1.10.8.50:FF:000005">
    <property type="entry name" value="Endonuclease 8"/>
    <property type="match status" value="1"/>
</dbReference>
<dbReference type="FunFam" id="3.20.190.10:FF:000002">
    <property type="entry name" value="Endonuclease 8"/>
    <property type="match status" value="1"/>
</dbReference>
<dbReference type="Gene3D" id="1.10.8.50">
    <property type="match status" value="1"/>
</dbReference>
<dbReference type="Gene3D" id="3.20.190.10">
    <property type="entry name" value="MutM-like, N-terminal"/>
    <property type="match status" value="1"/>
</dbReference>
<dbReference type="HAMAP" id="MF_01253">
    <property type="entry name" value="Endonuclease_8"/>
    <property type="match status" value="1"/>
</dbReference>
<dbReference type="InterPro" id="IPR015886">
    <property type="entry name" value="DNA_glyclase/AP_lyase_DNA-bd"/>
</dbReference>
<dbReference type="InterPro" id="IPR015887">
    <property type="entry name" value="DNA_glyclase_Znf_dom_DNA_BS"/>
</dbReference>
<dbReference type="InterPro" id="IPR044091">
    <property type="entry name" value="EcNei-like_N"/>
</dbReference>
<dbReference type="InterPro" id="IPR023713">
    <property type="entry name" value="Endonuclease-VIII"/>
</dbReference>
<dbReference type="InterPro" id="IPR012319">
    <property type="entry name" value="FPG_cat"/>
</dbReference>
<dbReference type="InterPro" id="IPR035937">
    <property type="entry name" value="MutM-like_N-ter"/>
</dbReference>
<dbReference type="InterPro" id="IPR010979">
    <property type="entry name" value="Ribosomal_uS13-like_H2TH"/>
</dbReference>
<dbReference type="InterPro" id="IPR000214">
    <property type="entry name" value="Znf_DNA_glyclase/AP_lyase"/>
</dbReference>
<dbReference type="InterPro" id="IPR010663">
    <property type="entry name" value="Znf_FPG/IleRS"/>
</dbReference>
<dbReference type="NCBIfam" id="NF007763">
    <property type="entry name" value="PRK10445.1"/>
    <property type="match status" value="1"/>
</dbReference>
<dbReference type="PANTHER" id="PTHR42697">
    <property type="entry name" value="ENDONUCLEASE 8"/>
    <property type="match status" value="1"/>
</dbReference>
<dbReference type="PANTHER" id="PTHR42697:SF1">
    <property type="entry name" value="ENDONUCLEASE 8"/>
    <property type="match status" value="1"/>
</dbReference>
<dbReference type="Pfam" id="PF01149">
    <property type="entry name" value="Fapy_DNA_glyco"/>
    <property type="match status" value="1"/>
</dbReference>
<dbReference type="Pfam" id="PF06831">
    <property type="entry name" value="H2TH"/>
    <property type="match status" value="1"/>
</dbReference>
<dbReference type="Pfam" id="PF06827">
    <property type="entry name" value="zf-FPG_IleRS"/>
    <property type="match status" value="1"/>
</dbReference>
<dbReference type="SMART" id="SM00898">
    <property type="entry name" value="Fapy_DNA_glyco"/>
    <property type="match status" value="1"/>
</dbReference>
<dbReference type="SMART" id="SM01232">
    <property type="entry name" value="H2TH"/>
    <property type="match status" value="1"/>
</dbReference>
<dbReference type="SUPFAM" id="SSF57716">
    <property type="entry name" value="Glucocorticoid receptor-like (DNA-binding domain)"/>
    <property type="match status" value="1"/>
</dbReference>
<dbReference type="SUPFAM" id="SSF81624">
    <property type="entry name" value="N-terminal domain of MutM-like DNA repair proteins"/>
    <property type="match status" value="1"/>
</dbReference>
<dbReference type="SUPFAM" id="SSF46946">
    <property type="entry name" value="S13-like H2TH domain"/>
    <property type="match status" value="1"/>
</dbReference>
<dbReference type="PROSITE" id="PS51068">
    <property type="entry name" value="FPG_CAT"/>
    <property type="match status" value="1"/>
</dbReference>
<dbReference type="PROSITE" id="PS01242">
    <property type="entry name" value="ZF_FPG_1"/>
    <property type="match status" value="1"/>
</dbReference>
<dbReference type="PROSITE" id="PS51066">
    <property type="entry name" value="ZF_FPG_2"/>
    <property type="match status" value="1"/>
</dbReference>
<accession>B4SZD3</accession>
<feature type="initiator methionine" description="Removed" evidence="1">
    <location>
        <position position="1"/>
    </location>
</feature>
<feature type="chain" id="PRO_1000139944" description="Endonuclease 8">
    <location>
        <begin position="2"/>
        <end position="263"/>
    </location>
</feature>
<feature type="zinc finger region" description="FPG-type" evidence="1">
    <location>
        <begin position="229"/>
        <end position="263"/>
    </location>
</feature>
<feature type="active site" description="Schiff-base intermediate with DNA" evidence="1">
    <location>
        <position position="2"/>
    </location>
</feature>
<feature type="active site" description="Proton donor" evidence="1">
    <location>
        <position position="3"/>
    </location>
</feature>
<feature type="active site" description="Proton donor; for beta-elimination activity" evidence="1">
    <location>
        <position position="53"/>
    </location>
</feature>
<feature type="active site" description="Proton donor; for delta-elimination activity" evidence="1">
    <location>
        <position position="253"/>
    </location>
</feature>
<feature type="binding site" evidence="1">
    <location>
        <position position="70"/>
    </location>
    <ligand>
        <name>DNA</name>
        <dbReference type="ChEBI" id="CHEBI:16991"/>
    </ligand>
</feature>
<feature type="binding site" evidence="1">
    <location>
        <position position="125"/>
    </location>
    <ligand>
        <name>DNA</name>
        <dbReference type="ChEBI" id="CHEBI:16991"/>
    </ligand>
</feature>
<feature type="binding site" evidence="1">
    <location>
        <position position="169"/>
    </location>
    <ligand>
        <name>DNA</name>
        <dbReference type="ChEBI" id="CHEBI:16991"/>
    </ligand>
</feature>
<organism>
    <name type="scientific">Salmonella newport (strain SL254)</name>
    <dbReference type="NCBI Taxonomy" id="423368"/>
    <lineage>
        <taxon>Bacteria</taxon>
        <taxon>Pseudomonadati</taxon>
        <taxon>Pseudomonadota</taxon>
        <taxon>Gammaproteobacteria</taxon>
        <taxon>Enterobacterales</taxon>
        <taxon>Enterobacteriaceae</taxon>
        <taxon>Salmonella</taxon>
    </lineage>
</organism>
<comment type="function">
    <text evidence="1">Involved in base excision repair of DNA damaged by oxidation or by mutagenic agents. Acts as a DNA glycosylase that recognizes and removes damaged bases. Has a preference for oxidized pyrimidines, such as thymine glycol, 5,6-dihydrouracil and 5,6-dihydrothymine. Has AP (apurinic/apyrimidinic) lyase activity and introduces nicks in the DNA strand. Cleaves the DNA backbone by beta-delta elimination to generate a single-strand break at the site of the removed base with both 3'- and 5'-phosphates.</text>
</comment>
<comment type="catalytic activity">
    <reaction evidence="1">
        <text>2'-deoxyribonucleotide-(2'-deoxyribose 5'-phosphate)-2'-deoxyribonucleotide-DNA = a 3'-end 2'-deoxyribonucleotide-(2,3-dehydro-2,3-deoxyribose 5'-phosphate)-DNA + a 5'-end 5'-phospho-2'-deoxyribonucleoside-DNA + H(+)</text>
        <dbReference type="Rhea" id="RHEA:66592"/>
        <dbReference type="Rhea" id="RHEA-COMP:13180"/>
        <dbReference type="Rhea" id="RHEA-COMP:16897"/>
        <dbReference type="Rhea" id="RHEA-COMP:17067"/>
        <dbReference type="ChEBI" id="CHEBI:15378"/>
        <dbReference type="ChEBI" id="CHEBI:136412"/>
        <dbReference type="ChEBI" id="CHEBI:157695"/>
        <dbReference type="ChEBI" id="CHEBI:167181"/>
        <dbReference type="EC" id="4.2.99.18"/>
    </reaction>
</comment>
<comment type="cofactor">
    <cofactor evidence="1">
        <name>Zn(2+)</name>
        <dbReference type="ChEBI" id="CHEBI:29105"/>
    </cofactor>
    <text evidence="1">Binds 1 zinc ion per subunit.</text>
</comment>
<comment type="similarity">
    <text evidence="1">Belongs to the FPG family.</text>
</comment>
<reference key="1">
    <citation type="journal article" date="2011" name="J. Bacteriol.">
        <title>Comparative genomics of 28 Salmonella enterica isolates: evidence for CRISPR-mediated adaptive sublineage evolution.</title>
        <authorList>
            <person name="Fricke W.F."/>
            <person name="Mammel M.K."/>
            <person name="McDermott P.F."/>
            <person name="Tartera C."/>
            <person name="White D.G."/>
            <person name="Leclerc J.E."/>
            <person name="Ravel J."/>
            <person name="Cebula T.A."/>
        </authorList>
    </citation>
    <scope>NUCLEOTIDE SEQUENCE [LARGE SCALE GENOMIC DNA]</scope>
    <source>
        <strain>SL254</strain>
    </source>
</reference>
<proteinExistence type="inferred from homology"/>
<keyword id="KW-0227">DNA damage</keyword>
<keyword id="KW-0234">DNA repair</keyword>
<keyword id="KW-0238">DNA-binding</keyword>
<keyword id="KW-0326">Glycosidase</keyword>
<keyword id="KW-0378">Hydrolase</keyword>
<keyword id="KW-0456">Lyase</keyword>
<keyword id="KW-0479">Metal-binding</keyword>
<keyword id="KW-0511">Multifunctional enzyme</keyword>
<keyword id="KW-0862">Zinc</keyword>
<keyword id="KW-0863">Zinc-finger</keyword>
<evidence type="ECO:0000255" key="1">
    <source>
        <dbReference type="HAMAP-Rule" id="MF_01253"/>
    </source>
</evidence>
<name>END8_SALNS</name>
<protein>
    <recommendedName>
        <fullName evidence="1">Endonuclease 8</fullName>
    </recommendedName>
    <alternativeName>
        <fullName evidence="1">DNA glycosylase/AP lyase Nei</fullName>
        <ecNumber evidence="1">3.2.2.-</ecNumber>
        <ecNumber evidence="1">4.2.99.18</ecNumber>
    </alternativeName>
    <alternativeName>
        <fullName evidence="1">DNA-(apurinic or apyrimidinic site) lyase Nei</fullName>
    </alternativeName>
    <alternativeName>
        <fullName evidence="1">Endonuclease VIII</fullName>
    </alternativeName>
</protein>
<sequence>MPEGPEIRRAADNLEAAIKGKPLTDVWFAFAQLKPYESQLTGQLVTRIETRGKALLTHFSNGLTLYSHNQLYGVWRVIDTGEIPQTTRILRVRLQTADKTILLYSASDIEMLTAEQLTTHPFLQRVGPDVLDARLTPEEVKARLLSPRFRNRQFSGLLLDQAFLAGLGNYLRVEILWQVGLTGQHKAKDLNEAQLNALSHALLDIPRLSYTTRGQADENKHHGALFRFKVFHRDGEVCERCGGIIEKTTLSSRPFYWCPHCQK</sequence>